<feature type="chain" id="PRO_0000145142" description="DNA topoisomerase 1">
    <location>
        <begin position="1"/>
        <end position="691"/>
    </location>
</feature>
<feature type="domain" description="Toprim" evidence="1">
    <location>
        <begin position="3"/>
        <end position="114"/>
    </location>
</feature>
<feature type="domain" description="Topo IA-type catalytic" evidence="2">
    <location>
        <begin position="129"/>
        <end position="558"/>
    </location>
</feature>
<feature type="zinc finger region" description="C4-type 1">
    <location>
        <begin position="579"/>
        <end position="605"/>
    </location>
</feature>
<feature type="zinc finger region" description="C4-type 2">
    <location>
        <begin position="619"/>
        <end position="647"/>
    </location>
</feature>
<feature type="zinc finger region" description="C4-type 3">
    <location>
        <begin position="660"/>
        <end position="683"/>
    </location>
</feature>
<feature type="region of interest" description="Interaction with DNA" evidence="1">
    <location>
        <begin position="163"/>
        <end position="168"/>
    </location>
</feature>
<feature type="active site" description="O-(5'-phospho-DNA)-tyrosine intermediate" evidence="2">
    <location>
        <position position="298"/>
    </location>
</feature>
<feature type="binding site" evidence="1">
    <location>
        <position position="9"/>
    </location>
    <ligand>
        <name>Mg(2+)</name>
        <dbReference type="ChEBI" id="CHEBI:18420"/>
        <note>catalytic</note>
    </ligand>
</feature>
<feature type="binding site" evidence="1">
    <location>
        <position position="82"/>
    </location>
    <ligand>
        <name>Mg(2+)</name>
        <dbReference type="ChEBI" id="CHEBI:18420"/>
        <note>catalytic</note>
    </ligand>
</feature>
<feature type="site" description="Interaction with DNA" evidence="1">
    <location>
        <position position="33"/>
    </location>
</feature>
<feature type="site" description="Interaction with DNA" evidence="1">
    <location>
        <position position="139"/>
    </location>
</feature>
<feature type="site" description="Interaction with DNA" evidence="1">
    <location>
        <position position="140"/>
    </location>
</feature>
<feature type="site" description="Interaction with DNA" evidence="1">
    <location>
        <position position="143"/>
    </location>
</feature>
<feature type="site" description="Interaction with DNA" evidence="1">
    <location>
        <position position="148"/>
    </location>
</feature>
<feature type="site" description="Interaction with DNA" evidence="1">
    <location>
        <position position="155"/>
    </location>
</feature>
<feature type="site" description="Interaction with DNA" evidence="1">
    <location>
        <position position="300"/>
    </location>
</feature>
<feature type="site" description="Interaction with DNA" evidence="1">
    <location>
        <position position="490"/>
    </location>
</feature>
<accession>P39814</accession>
<name>TOP1_BACSU</name>
<dbReference type="EC" id="5.6.2.1" evidence="1"/>
<dbReference type="EMBL" id="L27797">
    <property type="protein sequence ID" value="AAA22763.1"/>
    <property type="molecule type" value="Genomic_DNA"/>
</dbReference>
<dbReference type="EMBL" id="AJ000975">
    <property type="protein sequence ID" value="CAA04422.1"/>
    <property type="molecule type" value="Genomic_DNA"/>
</dbReference>
<dbReference type="EMBL" id="AL009126">
    <property type="protein sequence ID" value="CAB13485.1"/>
    <property type="molecule type" value="Genomic_DNA"/>
</dbReference>
<dbReference type="PIR" id="G69724">
    <property type="entry name" value="G69724"/>
</dbReference>
<dbReference type="RefSeq" id="NP_389494.1">
    <property type="nucleotide sequence ID" value="NC_000964.3"/>
</dbReference>
<dbReference type="RefSeq" id="WP_003245599.1">
    <property type="nucleotide sequence ID" value="NZ_OZ025638.1"/>
</dbReference>
<dbReference type="SMR" id="P39814"/>
<dbReference type="FunCoup" id="P39814">
    <property type="interactions" value="444"/>
</dbReference>
<dbReference type="STRING" id="224308.BSU16120"/>
<dbReference type="jPOST" id="P39814"/>
<dbReference type="PaxDb" id="224308-BSU16120"/>
<dbReference type="EnsemblBacteria" id="CAB13485">
    <property type="protein sequence ID" value="CAB13485"/>
    <property type="gene ID" value="BSU_16120"/>
</dbReference>
<dbReference type="GeneID" id="937982"/>
<dbReference type="KEGG" id="bsu:BSU16120"/>
<dbReference type="PATRIC" id="fig|224308.179.peg.1752"/>
<dbReference type="eggNOG" id="COG0550">
    <property type="taxonomic scope" value="Bacteria"/>
</dbReference>
<dbReference type="InParanoid" id="P39814"/>
<dbReference type="OrthoDB" id="9804262at2"/>
<dbReference type="PhylomeDB" id="P39814"/>
<dbReference type="BioCyc" id="BSUB:BSU16120-MONOMER"/>
<dbReference type="Proteomes" id="UP000001570">
    <property type="component" value="Chromosome"/>
</dbReference>
<dbReference type="GO" id="GO:0005694">
    <property type="term" value="C:chromosome"/>
    <property type="evidence" value="ECO:0007669"/>
    <property type="project" value="InterPro"/>
</dbReference>
<dbReference type="GO" id="GO:0003677">
    <property type="term" value="F:DNA binding"/>
    <property type="evidence" value="ECO:0007669"/>
    <property type="project" value="UniProtKB-KW"/>
</dbReference>
<dbReference type="GO" id="GO:0003917">
    <property type="term" value="F:DNA topoisomerase type I (single strand cut, ATP-independent) activity"/>
    <property type="evidence" value="ECO:0007669"/>
    <property type="project" value="UniProtKB-UniRule"/>
</dbReference>
<dbReference type="GO" id="GO:0008270">
    <property type="term" value="F:zinc ion binding"/>
    <property type="evidence" value="ECO:0007669"/>
    <property type="project" value="UniProtKB-KW"/>
</dbReference>
<dbReference type="GO" id="GO:0006265">
    <property type="term" value="P:DNA topological change"/>
    <property type="evidence" value="ECO:0007669"/>
    <property type="project" value="UniProtKB-UniRule"/>
</dbReference>
<dbReference type="CDD" id="cd00186">
    <property type="entry name" value="TOP1Ac"/>
    <property type="match status" value="1"/>
</dbReference>
<dbReference type="CDD" id="cd03363">
    <property type="entry name" value="TOPRIM_TopoIA_TopoI"/>
    <property type="match status" value="1"/>
</dbReference>
<dbReference type="Gene3D" id="3.40.50.140">
    <property type="match status" value="1"/>
</dbReference>
<dbReference type="Gene3D" id="3.30.65.10">
    <property type="entry name" value="Bacterial Topoisomerase I, domain 1"/>
    <property type="match status" value="2"/>
</dbReference>
<dbReference type="Gene3D" id="1.10.460.10">
    <property type="entry name" value="Topoisomerase I, domain 2"/>
    <property type="match status" value="1"/>
</dbReference>
<dbReference type="Gene3D" id="2.70.20.10">
    <property type="entry name" value="Topoisomerase I, domain 3"/>
    <property type="match status" value="1"/>
</dbReference>
<dbReference type="Gene3D" id="1.10.290.10">
    <property type="entry name" value="Topoisomerase I, domain 4"/>
    <property type="match status" value="1"/>
</dbReference>
<dbReference type="HAMAP" id="MF_00952">
    <property type="entry name" value="Topoisom_1_prok"/>
    <property type="match status" value="1"/>
</dbReference>
<dbReference type="InterPro" id="IPR000380">
    <property type="entry name" value="Topo_IA"/>
</dbReference>
<dbReference type="InterPro" id="IPR003601">
    <property type="entry name" value="Topo_IA_2"/>
</dbReference>
<dbReference type="InterPro" id="IPR023406">
    <property type="entry name" value="Topo_IA_AS"/>
</dbReference>
<dbReference type="InterPro" id="IPR013497">
    <property type="entry name" value="Topo_IA_cen"/>
</dbReference>
<dbReference type="InterPro" id="IPR013824">
    <property type="entry name" value="Topo_IA_cen_sub1"/>
</dbReference>
<dbReference type="InterPro" id="IPR013825">
    <property type="entry name" value="Topo_IA_cen_sub2"/>
</dbReference>
<dbReference type="InterPro" id="IPR013826">
    <property type="entry name" value="Topo_IA_cen_sub3"/>
</dbReference>
<dbReference type="InterPro" id="IPR023405">
    <property type="entry name" value="Topo_IA_core_domain"/>
</dbReference>
<dbReference type="InterPro" id="IPR003602">
    <property type="entry name" value="Topo_IA_DNA-bd_dom"/>
</dbReference>
<dbReference type="InterPro" id="IPR013498">
    <property type="entry name" value="Topo_IA_Znf"/>
</dbReference>
<dbReference type="InterPro" id="IPR005733">
    <property type="entry name" value="TopoI_bac-type"/>
</dbReference>
<dbReference type="InterPro" id="IPR028612">
    <property type="entry name" value="Topoisom_1_IA"/>
</dbReference>
<dbReference type="InterPro" id="IPR006171">
    <property type="entry name" value="TOPRIM_dom"/>
</dbReference>
<dbReference type="InterPro" id="IPR034149">
    <property type="entry name" value="TOPRIM_TopoI"/>
</dbReference>
<dbReference type="NCBIfam" id="TIGR01051">
    <property type="entry name" value="topA_bact"/>
    <property type="match status" value="1"/>
</dbReference>
<dbReference type="PANTHER" id="PTHR42785:SF1">
    <property type="entry name" value="DNA TOPOISOMERASE"/>
    <property type="match status" value="1"/>
</dbReference>
<dbReference type="PANTHER" id="PTHR42785">
    <property type="entry name" value="DNA TOPOISOMERASE, TYPE IA, CORE"/>
    <property type="match status" value="1"/>
</dbReference>
<dbReference type="Pfam" id="PF01131">
    <property type="entry name" value="Topoisom_bac"/>
    <property type="match status" value="1"/>
</dbReference>
<dbReference type="Pfam" id="PF01751">
    <property type="entry name" value="Toprim"/>
    <property type="match status" value="1"/>
</dbReference>
<dbReference type="Pfam" id="PF01396">
    <property type="entry name" value="Zn_ribbon_Top1"/>
    <property type="match status" value="3"/>
</dbReference>
<dbReference type="PRINTS" id="PR00417">
    <property type="entry name" value="PRTPISMRASEI"/>
</dbReference>
<dbReference type="SMART" id="SM00437">
    <property type="entry name" value="TOP1Ac"/>
    <property type="match status" value="1"/>
</dbReference>
<dbReference type="SMART" id="SM00436">
    <property type="entry name" value="TOP1Bc"/>
    <property type="match status" value="1"/>
</dbReference>
<dbReference type="SMART" id="SM00493">
    <property type="entry name" value="TOPRIM"/>
    <property type="match status" value="1"/>
</dbReference>
<dbReference type="SUPFAM" id="SSF56712">
    <property type="entry name" value="Prokaryotic type I DNA topoisomerase"/>
    <property type="match status" value="1"/>
</dbReference>
<dbReference type="SUPFAM" id="SSF57783">
    <property type="entry name" value="Zinc beta-ribbon"/>
    <property type="match status" value="1"/>
</dbReference>
<dbReference type="PROSITE" id="PS00396">
    <property type="entry name" value="TOPO_IA_1"/>
    <property type="match status" value="1"/>
</dbReference>
<dbReference type="PROSITE" id="PS52039">
    <property type="entry name" value="TOPO_IA_2"/>
    <property type="match status" value="1"/>
</dbReference>
<dbReference type="PROSITE" id="PS50880">
    <property type="entry name" value="TOPRIM"/>
    <property type="match status" value="1"/>
</dbReference>
<protein>
    <recommendedName>
        <fullName evidence="1">DNA topoisomerase 1</fullName>
        <ecNumber evidence="1">5.6.2.1</ecNumber>
    </recommendedName>
    <alternativeName>
        <fullName evidence="1">DNA topoisomerase I</fullName>
    </alternativeName>
    <alternativeName>
        <fullName>Omega-protein</fullName>
    </alternativeName>
    <alternativeName>
        <fullName>Relaxing enzyme</fullName>
    </alternativeName>
    <alternativeName>
        <fullName>Swivelase</fullName>
    </alternativeName>
    <alternativeName>
        <fullName>Untwisting enzyme</fullName>
    </alternativeName>
</protein>
<gene>
    <name evidence="1" type="primary">topA</name>
    <name type="synonym">topI</name>
    <name type="ordered locus">BSU16120</name>
</gene>
<evidence type="ECO:0000255" key="1">
    <source>
        <dbReference type="HAMAP-Rule" id="MF_00952"/>
    </source>
</evidence>
<evidence type="ECO:0000255" key="2">
    <source>
        <dbReference type="PROSITE-ProRule" id="PRU01383"/>
    </source>
</evidence>
<evidence type="ECO:0000269" key="3">
    <source>
    </source>
</evidence>
<sequence length="691" mass="79078">MSDYLVIVESPAKAKTIERYLGKKYKVKASMGHVRDLPKSQMGVDIEQNFEPKYITIRGKGPVLKELKTAAKKAKKVYLAADPDREGEAIAWHLAHSLDLDLNSDCRVVFNEITKDAIKESFKHPRMINMDLVDAQQARRILDRLVGYKISPILWKKVKKGLSAGRVQSVALRLIIDREKEINDFKPEEYWTIDGTFLKGQETFEASFFGKNGKKLPLNSEADVKEILSQLKGNQYTVEKVTKKERKRNPALPFTTSTLQQEAARKLNFRAKKTMMIAQQLYEGIDLGREGTVGLITYMRTDSTRISNTAVDEAAAFIDQTYGKEFLGGKRKPAKKNENAQDAHEAIRPTSVLRKPSELKAVLGRDQMRLYKLIWERFVASQMAPAVLDTMSVDLTNNGLTFRANGSKVKFSGFMKVYVEGKDDQMEEKDRMLPDLQEGDTVLSKDIEPEQHFTQPPPRYTEARLVKTLEERGIGRPSTYAPTLDTIQRRGYVALDNKRFVPTELGQIVLDLIMEFFPEIINVEFTAKMERDLDHVEEGNTEWVKIIDNFYTDFEKRVKKAESEMKEVEIEPEYAGEDCELCSSPMVYKMGRYGKFLACSNFPDCRNTKPIVKQIGVKCPSCGEGNIVERKSKKKRVFYGCDRYPDCEFVSWDKPIERKCPKCGKMLVEKKLKKGIQVQCVECDYKEEPQK</sequence>
<comment type="function">
    <text evidence="1">Releases the supercoiling and torsional tension of DNA, which is introduced during the DNA replication and transcription, by transiently cleaving and rejoining one strand of the DNA duplex. Introduces a single-strand break via transesterification at a target site in duplex DNA. The scissile phosphodiester is attacked by the catalytic tyrosine of the enzyme, resulting in the formation of a DNA-(5'-phosphotyrosyl)-enzyme intermediate and the expulsion of a 3'-OH DNA strand. The free DNA strand then undergoes passage around the unbroken strand, thus removing DNA supercoils. Finally, in the religation step, the DNA 3'-OH attacks the covalent intermediate to expel the active-site tyrosine and restore the DNA phosphodiester backbone.</text>
</comment>
<comment type="catalytic activity">
    <reaction evidence="1">
        <text>ATP-independent breakage of single-stranded DNA, followed by passage and rejoining.</text>
        <dbReference type="EC" id="5.6.2.1"/>
    </reaction>
</comment>
<comment type="cofactor">
    <cofactor evidence="1">
        <name>Mg(2+)</name>
        <dbReference type="ChEBI" id="CHEBI:18420"/>
    </cofactor>
</comment>
<comment type="subunit">
    <text evidence="1 3">Monomer. Interacts with the RNA polymerase core (PubMed:21710567).</text>
</comment>
<comment type="similarity">
    <text evidence="1">Belongs to the type IA topoisomerase family.</text>
</comment>
<reference key="1">
    <citation type="submission" date="1994-08" db="EMBL/GenBank/DDBJ databases">
        <title>Cloning and sequencing of the TopI gene, the gene encoding B. subtilis DNA topoisomerase I.</title>
        <authorList>
            <person name="de Jong S."/>
        </authorList>
    </citation>
    <scope>NUCLEOTIDE SEQUENCE [GENOMIC DNA]</scope>
    <source>
        <strain>168 / 8G5</strain>
    </source>
</reference>
<reference key="2">
    <citation type="submission" date="1997-10" db="EMBL/GenBank/DDBJ databases">
        <title>Cloning and sequencing 7.5 Kbp of DNA from Bacillus subtilis upstream of the codV gene.</title>
        <authorList>
            <person name="Foulger D."/>
            <person name="Errington J."/>
        </authorList>
    </citation>
    <scope>NUCLEOTIDE SEQUENCE [GENOMIC DNA]</scope>
    <source>
        <strain>168</strain>
    </source>
</reference>
<reference key="3">
    <citation type="journal article" date="1997" name="Nature">
        <title>The complete genome sequence of the Gram-positive bacterium Bacillus subtilis.</title>
        <authorList>
            <person name="Kunst F."/>
            <person name="Ogasawara N."/>
            <person name="Moszer I."/>
            <person name="Albertini A.M."/>
            <person name="Alloni G."/>
            <person name="Azevedo V."/>
            <person name="Bertero M.G."/>
            <person name="Bessieres P."/>
            <person name="Bolotin A."/>
            <person name="Borchert S."/>
            <person name="Borriss R."/>
            <person name="Boursier L."/>
            <person name="Brans A."/>
            <person name="Braun M."/>
            <person name="Brignell S.C."/>
            <person name="Bron S."/>
            <person name="Brouillet S."/>
            <person name="Bruschi C.V."/>
            <person name="Caldwell B."/>
            <person name="Capuano V."/>
            <person name="Carter N.M."/>
            <person name="Choi S.-K."/>
            <person name="Codani J.-J."/>
            <person name="Connerton I.F."/>
            <person name="Cummings N.J."/>
            <person name="Daniel R.A."/>
            <person name="Denizot F."/>
            <person name="Devine K.M."/>
            <person name="Duesterhoeft A."/>
            <person name="Ehrlich S.D."/>
            <person name="Emmerson P.T."/>
            <person name="Entian K.-D."/>
            <person name="Errington J."/>
            <person name="Fabret C."/>
            <person name="Ferrari E."/>
            <person name="Foulger D."/>
            <person name="Fritz C."/>
            <person name="Fujita M."/>
            <person name="Fujita Y."/>
            <person name="Fuma S."/>
            <person name="Galizzi A."/>
            <person name="Galleron N."/>
            <person name="Ghim S.-Y."/>
            <person name="Glaser P."/>
            <person name="Goffeau A."/>
            <person name="Golightly E.J."/>
            <person name="Grandi G."/>
            <person name="Guiseppi G."/>
            <person name="Guy B.J."/>
            <person name="Haga K."/>
            <person name="Haiech J."/>
            <person name="Harwood C.R."/>
            <person name="Henaut A."/>
            <person name="Hilbert H."/>
            <person name="Holsappel S."/>
            <person name="Hosono S."/>
            <person name="Hullo M.-F."/>
            <person name="Itaya M."/>
            <person name="Jones L.-M."/>
            <person name="Joris B."/>
            <person name="Karamata D."/>
            <person name="Kasahara Y."/>
            <person name="Klaerr-Blanchard M."/>
            <person name="Klein C."/>
            <person name="Kobayashi Y."/>
            <person name="Koetter P."/>
            <person name="Koningstein G."/>
            <person name="Krogh S."/>
            <person name="Kumano M."/>
            <person name="Kurita K."/>
            <person name="Lapidus A."/>
            <person name="Lardinois S."/>
            <person name="Lauber J."/>
            <person name="Lazarevic V."/>
            <person name="Lee S.-M."/>
            <person name="Levine A."/>
            <person name="Liu H."/>
            <person name="Masuda S."/>
            <person name="Mauel C."/>
            <person name="Medigue C."/>
            <person name="Medina N."/>
            <person name="Mellado R.P."/>
            <person name="Mizuno M."/>
            <person name="Moestl D."/>
            <person name="Nakai S."/>
            <person name="Noback M."/>
            <person name="Noone D."/>
            <person name="O'Reilly M."/>
            <person name="Ogawa K."/>
            <person name="Ogiwara A."/>
            <person name="Oudega B."/>
            <person name="Park S.-H."/>
            <person name="Parro V."/>
            <person name="Pohl T.M."/>
            <person name="Portetelle D."/>
            <person name="Porwollik S."/>
            <person name="Prescott A.M."/>
            <person name="Presecan E."/>
            <person name="Pujic P."/>
            <person name="Purnelle B."/>
            <person name="Rapoport G."/>
            <person name="Rey M."/>
            <person name="Reynolds S."/>
            <person name="Rieger M."/>
            <person name="Rivolta C."/>
            <person name="Rocha E."/>
            <person name="Roche B."/>
            <person name="Rose M."/>
            <person name="Sadaie Y."/>
            <person name="Sato T."/>
            <person name="Scanlan E."/>
            <person name="Schleich S."/>
            <person name="Schroeter R."/>
            <person name="Scoffone F."/>
            <person name="Sekiguchi J."/>
            <person name="Sekowska A."/>
            <person name="Seror S.J."/>
            <person name="Serror P."/>
            <person name="Shin B.-S."/>
            <person name="Soldo B."/>
            <person name="Sorokin A."/>
            <person name="Tacconi E."/>
            <person name="Takagi T."/>
            <person name="Takahashi H."/>
            <person name="Takemaru K."/>
            <person name="Takeuchi M."/>
            <person name="Tamakoshi A."/>
            <person name="Tanaka T."/>
            <person name="Terpstra P."/>
            <person name="Tognoni A."/>
            <person name="Tosato V."/>
            <person name="Uchiyama S."/>
            <person name="Vandenbol M."/>
            <person name="Vannier F."/>
            <person name="Vassarotti A."/>
            <person name="Viari A."/>
            <person name="Wambutt R."/>
            <person name="Wedler E."/>
            <person name="Wedler H."/>
            <person name="Weitzenegger T."/>
            <person name="Winters P."/>
            <person name="Wipat A."/>
            <person name="Yamamoto H."/>
            <person name="Yamane K."/>
            <person name="Yasumoto K."/>
            <person name="Yata K."/>
            <person name="Yoshida K."/>
            <person name="Yoshikawa H.-F."/>
            <person name="Zumstein E."/>
            <person name="Yoshikawa H."/>
            <person name="Danchin A."/>
        </authorList>
    </citation>
    <scope>NUCLEOTIDE SEQUENCE [LARGE SCALE GENOMIC DNA]</scope>
    <source>
        <strain>168</strain>
    </source>
</reference>
<reference key="4">
    <citation type="journal article" date="2011" name="Proteomics">
        <title>The dynamic protein partnership of RNA polymerase in Bacillus subtilis.</title>
        <authorList>
            <person name="Delumeau O."/>
            <person name="Lecointe F."/>
            <person name="Muntel J."/>
            <person name="Guillot A."/>
            <person name="Guedon E."/>
            <person name="Monnet V."/>
            <person name="Hecker M."/>
            <person name="Becher D."/>
            <person name="Polard P."/>
            <person name="Noirot P."/>
        </authorList>
    </citation>
    <scope>SUBUNIT</scope>
    <source>
        <strain>168</strain>
    </source>
</reference>
<organism>
    <name type="scientific">Bacillus subtilis (strain 168)</name>
    <dbReference type="NCBI Taxonomy" id="224308"/>
    <lineage>
        <taxon>Bacteria</taxon>
        <taxon>Bacillati</taxon>
        <taxon>Bacillota</taxon>
        <taxon>Bacilli</taxon>
        <taxon>Bacillales</taxon>
        <taxon>Bacillaceae</taxon>
        <taxon>Bacillus</taxon>
    </lineage>
</organism>
<proteinExistence type="evidence at protein level"/>
<keyword id="KW-0238">DNA-binding</keyword>
<keyword id="KW-0413">Isomerase</keyword>
<keyword id="KW-0460">Magnesium</keyword>
<keyword id="KW-0479">Metal-binding</keyword>
<keyword id="KW-1185">Reference proteome</keyword>
<keyword id="KW-0677">Repeat</keyword>
<keyword id="KW-0799">Topoisomerase</keyword>
<keyword id="KW-0862">Zinc</keyword>
<keyword id="KW-0863">Zinc-finger</keyword>